<protein>
    <recommendedName>
        <fullName evidence="1">Large ribosomal subunit protein bL32</fullName>
    </recommendedName>
    <alternativeName>
        <fullName evidence="3">50S ribosomal protein L32</fullName>
    </alternativeName>
</protein>
<keyword id="KW-1185">Reference proteome</keyword>
<keyword id="KW-0687">Ribonucleoprotein</keyword>
<keyword id="KW-0689">Ribosomal protein</keyword>
<name>RL32_BRUA2</name>
<comment type="similarity">
    <text evidence="1">Belongs to the bacterial ribosomal protein bL32 family.</text>
</comment>
<dbReference type="EMBL" id="AM040264">
    <property type="protein sequence ID" value="CAJ11741.1"/>
    <property type="molecule type" value="Genomic_DNA"/>
</dbReference>
<dbReference type="RefSeq" id="WP_002964856.1">
    <property type="nucleotide sequence ID" value="NZ_KN046823.1"/>
</dbReference>
<dbReference type="SMR" id="Q2YLD3"/>
<dbReference type="STRING" id="359391.BAB1_1785"/>
<dbReference type="GeneID" id="97533091"/>
<dbReference type="KEGG" id="bmf:BAB1_1785"/>
<dbReference type="PATRIC" id="fig|359391.11.peg.296"/>
<dbReference type="HOGENOM" id="CLU_129084_2_2_5"/>
<dbReference type="Proteomes" id="UP000002719">
    <property type="component" value="Chromosome I"/>
</dbReference>
<dbReference type="GO" id="GO:0015934">
    <property type="term" value="C:large ribosomal subunit"/>
    <property type="evidence" value="ECO:0007669"/>
    <property type="project" value="InterPro"/>
</dbReference>
<dbReference type="GO" id="GO:0003735">
    <property type="term" value="F:structural constituent of ribosome"/>
    <property type="evidence" value="ECO:0007669"/>
    <property type="project" value="InterPro"/>
</dbReference>
<dbReference type="GO" id="GO:0006412">
    <property type="term" value="P:translation"/>
    <property type="evidence" value="ECO:0007669"/>
    <property type="project" value="UniProtKB-UniRule"/>
</dbReference>
<dbReference type="Gene3D" id="1.20.5.640">
    <property type="entry name" value="Single helix bin"/>
    <property type="match status" value="1"/>
</dbReference>
<dbReference type="HAMAP" id="MF_00340">
    <property type="entry name" value="Ribosomal_bL32"/>
    <property type="match status" value="1"/>
</dbReference>
<dbReference type="InterPro" id="IPR002677">
    <property type="entry name" value="Ribosomal_bL32"/>
</dbReference>
<dbReference type="InterPro" id="IPR044957">
    <property type="entry name" value="Ribosomal_bL32_bact"/>
</dbReference>
<dbReference type="InterPro" id="IPR011332">
    <property type="entry name" value="Ribosomal_zn-bd"/>
</dbReference>
<dbReference type="NCBIfam" id="TIGR01031">
    <property type="entry name" value="rpmF_bact"/>
    <property type="match status" value="1"/>
</dbReference>
<dbReference type="PANTHER" id="PTHR35534">
    <property type="entry name" value="50S RIBOSOMAL PROTEIN L32"/>
    <property type="match status" value="1"/>
</dbReference>
<dbReference type="PANTHER" id="PTHR35534:SF1">
    <property type="entry name" value="LARGE RIBOSOMAL SUBUNIT PROTEIN BL32"/>
    <property type="match status" value="1"/>
</dbReference>
<dbReference type="Pfam" id="PF01783">
    <property type="entry name" value="Ribosomal_L32p"/>
    <property type="match status" value="1"/>
</dbReference>
<dbReference type="SUPFAM" id="SSF57829">
    <property type="entry name" value="Zn-binding ribosomal proteins"/>
    <property type="match status" value="1"/>
</dbReference>
<reference key="1">
    <citation type="journal article" date="2005" name="Infect. Immun.">
        <title>Whole-genome analyses of speciation events in pathogenic Brucellae.</title>
        <authorList>
            <person name="Chain P.S."/>
            <person name="Comerci D.J."/>
            <person name="Tolmasky M.E."/>
            <person name="Larimer F.W."/>
            <person name="Malfatti S.A."/>
            <person name="Vergez L.M."/>
            <person name="Aguero F."/>
            <person name="Land M.L."/>
            <person name="Ugalde R.A."/>
            <person name="Garcia E."/>
        </authorList>
    </citation>
    <scope>NUCLEOTIDE SEQUENCE [LARGE SCALE GENOMIC DNA]</scope>
    <source>
        <strain>2308</strain>
    </source>
</reference>
<organism>
    <name type="scientific">Brucella abortus (strain 2308)</name>
    <dbReference type="NCBI Taxonomy" id="359391"/>
    <lineage>
        <taxon>Bacteria</taxon>
        <taxon>Pseudomonadati</taxon>
        <taxon>Pseudomonadota</taxon>
        <taxon>Alphaproteobacteria</taxon>
        <taxon>Hyphomicrobiales</taxon>
        <taxon>Brucellaceae</taxon>
        <taxon>Brucella/Ochrobactrum group</taxon>
        <taxon>Brucella</taxon>
    </lineage>
</organism>
<accession>Q2YLD3</accession>
<sequence>MAVPKRKTSPSRRGMRRSADALKAPTYVEDKNSGELRRPHHIDLKSGMYRGRQVLEPKE</sequence>
<evidence type="ECO:0000255" key="1">
    <source>
        <dbReference type="HAMAP-Rule" id="MF_00340"/>
    </source>
</evidence>
<evidence type="ECO:0000256" key="2">
    <source>
        <dbReference type="SAM" id="MobiDB-lite"/>
    </source>
</evidence>
<evidence type="ECO:0000305" key="3"/>
<proteinExistence type="inferred from homology"/>
<feature type="chain" id="PRO_0000296433" description="Large ribosomal subunit protein bL32">
    <location>
        <begin position="1"/>
        <end position="59"/>
    </location>
</feature>
<feature type="region of interest" description="Disordered" evidence="2">
    <location>
        <begin position="1"/>
        <end position="59"/>
    </location>
</feature>
<feature type="compositionally biased region" description="Basic residues" evidence="2">
    <location>
        <begin position="1"/>
        <end position="16"/>
    </location>
</feature>
<feature type="compositionally biased region" description="Basic and acidic residues" evidence="2">
    <location>
        <begin position="28"/>
        <end position="44"/>
    </location>
</feature>
<gene>
    <name evidence="1" type="primary">rpmF</name>
    <name type="ordered locus">BAB1_1785</name>
</gene>